<protein>
    <recommendedName>
        <fullName>ATP-binding protein ChvD</fullName>
    </recommendedName>
</protein>
<name>CHVD_RHIRD</name>
<keyword id="KW-0067">ATP-binding</keyword>
<keyword id="KW-0192">Crown gall tumor</keyword>
<keyword id="KW-0547">Nucleotide-binding</keyword>
<keyword id="KW-0813">Transport</keyword>
<dbReference type="EMBL" id="M21852">
    <property type="protein sequence ID" value="AAA22084.1"/>
    <property type="molecule type" value="Genomic_DNA"/>
</dbReference>
<dbReference type="PIR" id="A32349">
    <property type="entry name" value="A32349"/>
</dbReference>
<dbReference type="SMR" id="P12622"/>
<dbReference type="eggNOG" id="COG0488">
    <property type="taxonomic scope" value="Bacteria"/>
</dbReference>
<dbReference type="GO" id="GO:0005524">
    <property type="term" value="F:ATP binding"/>
    <property type="evidence" value="ECO:0007669"/>
    <property type="project" value="UniProtKB-KW"/>
</dbReference>
<dbReference type="GO" id="GO:0016887">
    <property type="term" value="F:ATP hydrolysis activity"/>
    <property type="evidence" value="ECO:0007669"/>
    <property type="project" value="InterPro"/>
</dbReference>
<dbReference type="GO" id="GO:0045900">
    <property type="term" value="P:negative regulation of translational elongation"/>
    <property type="evidence" value="ECO:0007669"/>
    <property type="project" value="InterPro"/>
</dbReference>
<dbReference type="FunFam" id="3.40.50.300:FF:000011">
    <property type="entry name" value="Putative ABC transporter ATP-binding component"/>
    <property type="match status" value="1"/>
</dbReference>
<dbReference type="Gene3D" id="3.40.50.300">
    <property type="entry name" value="P-loop containing nucleotide triphosphate hydrolases"/>
    <property type="match status" value="2"/>
</dbReference>
<dbReference type="InterPro" id="IPR032781">
    <property type="entry name" value="ABC_tran_Xtn"/>
</dbReference>
<dbReference type="InterPro" id="IPR003439">
    <property type="entry name" value="ABC_transporter-like_ATP-bd"/>
</dbReference>
<dbReference type="InterPro" id="IPR022374">
    <property type="entry name" value="EttA"/>
</dbReference>
<dbReference type="InterPro" id="IPR027417">
    <property type="entry name" value="P-loop_NTPase"/>
</dbReference>
<dbReference type="PANTHER" id="PTHR43858:SF1">
    <property type="entry name" value="ABC TRANSPORTER-RELATED PROTEIN"/>
    <property type="match status" value="1"/>
</dbReference>
<dbReference type="PANTHER" id="PTHR43858">
    <property type="entry name" value="ENERGY-DEPENDENT TRANSLATIONAL THROTTLE PROTEIN ETTA"/>
    <property type="match status" value="1"/>
</dbReference>
<dbReference type="Pfam" id="PF00005">
    <property type="entry name" value="ABC_tran"/>
    <property type="match status" value="2"/>
</dbReference>
<dbReference type="Pfam" id="PF12848">
    <property type="entry name" value="ABC_tran_Xtn"/>
    <property type="match status" value="1"/>
</dbReference>
<dbReference type="SUPFAM" id="SSF52540">
    <property type="entry name" value="P-loop containing nucleoside triphosphate hydrolases"/>
    <property type="match status" value="2"/>
</dbReference>
<dbReference type="PROSITE" id="PS00211">
    <property type="entry name" value="ABC_TRANSPORTER_1"/>
    <property type="match status" value="1"/>
</dbReference>
<organism>
    <name type="scientific">Rhizobium radiobacter</name>
    <name type="common">Agrobacterium tumefaciens</name>
    <name type="synonym">Agrobacterium radiobacter</name>
    <dbReference type="NCBI Taxonomy" id="358"/>
    <lineage>
        <taxon>Bacteria</taxon>
        <taxon>Pseudomonadati</taxon>
        <taxon>Pseudomonadota</taxon>
        <taxon>Alphaproteobacteria</taxon>
        <taxon>Hyphomicrobiales</taxon>
        <taxon>Rhizobiaceae</taxon>
        <taxon>Rhizobium/Agrobacterium group</taxon>
        <taxon>Agrobacterium</taxon>
        <taxon>Agrobacterium tumefaciens complex</taxon>
    </lineage>
</organism>
<feature type="chain" id="PRO_0000092233" description="ATP-binding protein ChvD">
    <location>
        <begin position="1" status="less than"/>
        <end position="286" status="greater than"/>
    </location>
</feature>
<feature type="domain" description="ABC transporter" evidence="1">
    <location>
        <begin position="21"/>
        <end position="85"/>
    </location>
</feature>
<feature type="non-terminal residue">
    <location>
        <position position="1"/>
    </location>
</feature>
<feature type="non-terminal residue">
    <location>
        <position position="286"/>
    </location>
</feature>
<gene>
    <name type="primary">chvD</name>
</gene>
<proteinExistence type="inferred from homology"/>
<reference key="1">
    <citation type="journal article" date="1988" name="J. Bacteriol.">
        <title>Transcriptional regulation of the virA and virG genes of Agrobacterium tumefaciens.</title>
        <authorList>
            <person name="Winans S.C."/>
            <person name="Kerstetter R.A."/>
            <person name="Nester E.W."/>
        </authorList>
    </citation>
    <scope>NUCLEOTIDE SEQUENCE [GENOMIC DNA]</scope>
</reference>
<comment type="function">
    <text>The induction of virG by growth under acidic conditions and by phosphate starvation, in the absence of plant inducers, is influenced by ChvD.</text>
</comment>
<comment type="similarity">
    <text evidence="2">Belongs to the ABC transporter superfamily.</text>
</comment>
<sequence length="286" mass="32017">VDRYNELMMNYSDETADEGAKLQDMIDSQNLWDLENQVEMAMDALRCPPGDSAVTGLSGGERRRVALCKLLLSQPDLLLLDEPTNHLDAETIAWLEKHLRDYPGAVMMITHDRYFLDNVTGWILELDRGRGIPYEGNYSAYLQAKAKRMQQEAREDASRQKAISREQEWIASSPKARQTKSKARIRRYDELVEAAENRRPGDAQIVIPVAERLGRVVIEAENLTKSYGDRVLIENLTFKLPPGGIVGVIGPNGAGKTTLFRMITGQEQPDSGSVTVGETVHLGYVD</sequence>
<accession>P12622</accession>
<evidence type="ECO:0000255" key="1">
    <source>
        <dbReference type="PROSITE-ProRule" id="PRU00434"/>
    </source>
</evidence>
<evidence type="ECO:0000305" key="2"/>